<gene>
    <name evidence="1" type="primary">glmU</name>
    <name type="ordered locus">HDEF_0226</name>
</gene>
<reference key="1">
    <citation type="journal article" date="2009" name="Proc. Natl. Acad. Sci. U.S.A.">
        <title>Hamiltonella defensa, genome evolution of protective bacterial endosymbiont from pathogenic ancestors.</title>
        <authorList>
            <person name="Degnan P.H."/>
            <person name="Yu Y."/>
            <person name="Sisneros N."/>
            <person name="Wing R.A."/>
            <person name="Moran N.A."/>
        </authorList>
    </citation>
    <scope>NUCLEOTIDE SEQUENCE [LARGE SCALE GENOMIC DNA]</scope>
    <source>
        <strain>5AT</strain>
    </source>
</reference>
<protein>
    <recommendedName>
        <fullName evidence="1">Bifunctional protein GlmU</fullName>
    </recommendedName>
    <domain>
        <recommendedName>
            <fullName evidence="1">UDP-N-acetylglucosamine pyrophosphorylase</fullName>
            <ecNumber evidence="1">2.7.7.23</ecNumber>
        </recommendedName>
        <alternativeName>
            <fullName evidence="1">N-acetylglucosamine-1-phosphate uridyltransferase</fullName>
        </alternativeName>
    </domain>
    <domain>
        <recommendedName>
            <fullName evidence="1">Glucosamine-1-phosphate N-acetyltransferase</fullName>
            <ecNumber evidence="1">2.3.1.157</ecNumber>
        </recommendedName>
    </domain>
</protein>
<sequence>MSKKVMSVVILAAGKGTRMCSNLPKVLHLLAGKPMVQHVINTANQLDCTRIHLVYGHGGALLKEKLNNEKLNWILQEEQWGTGHALQKAIPYFSEDENILVLYGDVPLIEVDTLNRLLLAKPHGGISLLTARVDNPRGYGRIIRKNDDISGIVECKEATEIQKKINEINTGIMAINSSDLKKWLKQLKNDNHQNEFYLTDIIKMAYQENRKIIGIQPAHLNEIEGINDGLQLARLERLFQKQQAEKLLLSGVRILDPARFDLRGQLICGSDVVIDTNVIIEGEVTLGDRVQIRTGCLLKNCRIGDDSQINAYTVIEGSFLDKNCVVGPFARLRPGSELSEKVHVGNFVEIKKSSLGQGSKAGHLSYLGDAEIGSGVNIGAGTITCNYDGVNKHKTQIGDYVFVGSHTQFIAPVTVGDHATIGAGTTVTLNVPENELGLSRVKQKNIQGWKRPKKT</sequence>
<name>GLMU_HAMD5</name>
<feature type="chain" id="PRO_1000215775" description="Bifunctional protein GlmU">
    <location>
        <begin position="1"/>
        <end position="455"/>
    </location>
</feature>
<feature type="region of interest" description="Pyrophosphorylase" evidence="1">
    <location>
        <begin position="1"/>
        <end position="229"/>
    </location>
</feature>
<feature type="region of interest" description="Linker" evidence="1">
    <location>
        <begin position="230"/>
        <end position="250"/>
    </location>
</feature>
<feature type="region of interest" description="N-acetyltransferase" evidence="1">
    <location>
        <begin position="251"/>
        <end position="455"/>
    </location>
</feature>
<feature type="active site" description="Proton acceptor" evidence="1">
    <location>
        <position position="363"/>
    </location>
</feature>
<feature type="binding site" evidence="1">
    <location>
        <begin position="11"/>
        <end position="14"/>
    </location>
    <ligand>
        <name>UDP-N-acetyl-alpha-D-glucosamine</name>
        <dbReference type="ChEBI" id="CHEBI:57705"/>
    </ligand>
</feature>
<feature type="binding site" evidence="1">
    <location>
        <position position="25"/>
    </location>
    <ligand>
        <name>UDP-N-acetyl-alpha-D-glucosamine</name>
        <dbReference type="ChEBI" id="CHEBI:57705"/>
    </ligand>
</feature>
<feature type="binding site" evidence="1">
    <location>
        <position position="76"/>
    </location>
    <ligand>
        <name>UDP-N-acetyl-alpha-D-glucosamine</name>
        <dbReference type="ChEBI" id="CHEBI:57705"/>
    </ligand>
</feature>
<feature type="binding site" evidence="1">
    <location>
        <begin position="81"/>
        <end position="82"/>
    </location>
    <ligand>
        <name>UDP-N-acetyl-alpha-D-glucosamine</name>
        <dbReference type="ChEBI" id="CHEBI:57705"/>
    </ligand>
</feature>
<feature type="binding site" evidence="1">
    <location>
        <begin position="103"/>
        <end position="105"/>
    </location>
    <ligand>
        <name>UDP-N-acetyl-alpha-D-glucosamine</name>
        <dbReference type="ChEBI" id="CHEBI:57705"/>
    </ligand>
</feature>
<feature type="binding site" evidence="1">
    <location>
        <position position="105"/>
    </location>
    <ligand>
        <name>Mg(2+)</name>
        <dbReference type="ChEBI" id="CHEBI:18420"/>
    </ligand>
</feature>
<feature type="binding site" evidence="1">
    <location>
        <position position="140"/>
    </location>
    <ligand>
        <name>UDP-N-acetyl-alpha-D-glucosamine</name>
        <dbReference type="ChEBI" id="CHEBI:57705"/>
    </ligand>
</feature>
<feature type="binding site" evidence="1">
    <location>
        <position position="154"/>
    </location>
    <ligand>
        <name>UDP-N-acetyl-alpha-D-glucosamine</name>
        <dbReference type="ChEBI" id="CHEBI:57705"/>
    </ligand>
</feature>
<feature type="binding site" evidence="1">
    <location>
        <position position="169"/>
    </location>
    <ligand>
        <name>UDP-N-acetyl-alpha-D-glucosamine</name>
        <dbReference type="ChEBI" id="CHEBI:57705"/>
    </ligand>
</feature>
<feature type="binding site" evidence="1">
    <location>
        <position position="227"/>
    </location>
    <ligand>
        <name>Mg(2+)</name>
        <dbReference type="ChEBI" id="CHEBI:18420"/>
    </ligand>
</feature>
<feature type="binding site" evidence="1">
    <location>
        <position position="227"/>
    </location>
    <ligand>
        <name>UDP-N-acetyl-alpha-D-glucosamine</name>
        <dbReference type="ChEBI" id="CHEBI:57705"/>
    </ligand>
</feature>
<feature type="binding site" evidence="1">
    <location>
        <position position="333"/>
    </location>
    <ligand>
        <name>UDP-N-acetyl-alpha-D-glucosamine</name>
        <dbReference type="ChEBI" id="CHEBI:57705"/>
    </ligand>
</feature>
<feature type="binding site" evidence="1">
    <location>
        <position position="351"/>
    </location>
    <ligand>
        <name>UDP-N-acetyl-alpha-D-glucosamine</name>
        <dbReference type="ChEBI" id="CHEBI:57705"/>
    </ligand>
</feature>
<feature type="binding site" evidence="1">
    <location>
        <position position="366"/>
    </location>
    <ligand>
        <name>UDP-N-acetyl-alpha-D-glucosamine</name>
        <dbReference type="ChEBI" id="CHEBI:57705"/>
    </ligand>
</feature>
<feature type="binding site" evidence="1">
    <location>
        <position position="377"/>
    </location>
    <ligand>
        <name>UDP-N-acetyl-alpha-D-glucosamine</name>
        <dbReference type="ChEBI" id="CHEBI:57705"/>
    </ligand>
</feature>
<feature type="binding site" evidence="1">
    <location>
        <position position="380"/>
    </location>
    <ligand>
        <name>acetyl-CoA</name>
        <dbReference type="ChEBI" id="CHEBI:57288"/>
    </ligand>
</feature>
<feature type="binding site" evidence="1">
    <location>
        <begin position="386"/>
        <end position="387"/>
    </location>
    <ligand>
        <name>acetyl-CoA</name>
        <dbReference type="ChEBI" id="CHEBI:57288"/>
    </ligand>
</feature>
<feature type="binding site" evidence="1">
    <location>
        <position position="405"/>
    </location>
    <ligand>
        <name>acetyl-CoA</name>
        <dbReference type="ChEBI" id="CHEBI:57288"/>
    </ligand>
</feature>
<feature type="binding site" evidence="1">
    <location>
        <position position="423"/>
    </location>
    <ligand>
        <name>acetyl-CoA</name>
        <dbReference type="ChEBI" id="CHEBI:57288"/>
    </ligand>
</feature>
<feature type="binding site" evidence="1">
    <location>
        <position position="440"/>
    </location>
    <ligand>
        <name>acetyl-CoA</name>
        <dbReference type="ChEBI" id="CHEBI:57288"/>
    </ligand>
</feature>
<dbReference type="EC" id="2.7.7.23" evidence="1"/>
<dbReference type="EC" id="2.3.1.157" evidence="1"/>
<dbReference type="EMBL" id="CP001277">
    <property type="protein sequence ID" value="ACQ66994.1"/>
    <property type="molecule type" value="Genomic_DNA"/>
</dbReference>
<dbReference type="RefSeq" id="WP_012737959.1">
    <property type="nucleotide sequence ID" value="NC_012751.1"/>
</dbReference>
<dbReference type="SMR" id="C4K351"/>
<dbReference type="STRING" id="572265.HDEF_0226"/>
<dbReference type="GeneID" id="66260152"/>
<dbReference type="KEGG" id="hde:HDEF_0226"/>
<dbReference type="eggNOG" id="COG1207">
    <property type="taxonomic scope" value="Bacteria"/>
</dbReference>
<dbReference type="HOGENOM" id="CLU_029499_15_2_6"/>
<dbReference type="UniPathway" id="UPA00113">
    <property type="reaction ID" value="UER00532"/>
</dbReference>
<dbReference type="UniPathway" id="UPA00113">
    <property type="reaction ID" value="UER00533"/>
</dbReference>
<dbReference type="UniPathway" id="UPA00973"/>
<dbReference type="Proteomes" id="UP000002334">
    <property type="component" value="Chromosome"/>
</dbReference>
<dbReference type="GO" id="GO:0005737">
    <property type="term" value="C:cytoplasm"/>
    <property type="evidence" value="ECO:0007669"/>
    <property type="project" value="UniProtKB-SubCell"/>
</dbReference>
<dbReference type="GO" id="GO:0016020">
    <property type="term" value="C:membrane"/>
    <property type="evidence" value="ECO:0007669"/>
    <property type="project" value="GOC"/>
</dbReference>
<dbReference type="GO" id="GO:0019134">
    <property type="term" value="F:glucosamine-1-phosphate N-acetyltransferase activity"/>
    <property type="evidence" value="ECO:0007669"/>
    <property type="project" value="UniProtKB-UniRule"/>
</dbReference>
<dbReference type="GO" id="GO:0000287">
    <property type="term" value="F:magnesium ion binding"/>
    <property type="evidence" value="ECO:0007669"/>
    <property type="project" value="UniProtKB-UniRule"/>
</dbReference>
<dbReference type="GO" id="GO:0003977">
    <property type="term" value="F:UDP-N-acetylglucosamine diphosphorylase activity"/>
    <property type="evidence" value="ECO:0007669"/>
    <property type="project" value="UniProtKB-UniRule"/>
</dbReference>
<dbReference type="GO" id="GO:0000902">
    <property type="term" value="P:cell morphogenesis"/>
    <property type="evidence" value="ECO:0007669"/>
    <property type="project" value="UniProtKB-UniRule"/>
</dbReference>
<dbReference type="GO" id="GO:0071555">
    <property type="term" value="P:cell wall organization"/>
    <property type="evidence" value="ECO:0007669"/>
    <property type="project" value="UniProtKB-KW"/>
</dbReference>
<dbReference type="GO" id="GO:0009245">
    <property type="term" value="P:lipid A biosynthetic process"/>
    <property type="evidence" value="ECO:0007669"/>
    <property type="project" value="UniProtKB-UniRule"/>
</dbReference>
<dbReference type="GO" id="GO:0009252">
    <property type="term" value="P:peptidoglycan biosynthetic process"/>
    <property type="evidence" value="ECO:0007669"/>
    <property type="project" value="UniProtKB-UniRule"/>
</dbReference>
<dbReference type="GO" id="GO:0008360">
    <property type="term" value="P:regulation of cell shape"/>
    <property type="evidence" value="ECO:0007669"/>
    <property type="project" value="UniProtKB-KW"/>
</dbReference>
<dbReference type="GO" id="GO:0006048">
    <property type="term" value="P:UDP-N-acetylglucosamine biosynthetic process"/>
    <property type="evidence" value="ECO:0007669"/>
    <property type="project" value="UniProtKB-UniPathway"/>
</dbReference>
<dbReference type="CDD" id="cd02540">
    <property type="entry name" value="GT2_GlmU_N_bac"/>
    <property type="match status" value="1"/>
</dbReference>
<dbReference type="CDD" id="cd03353">
    <property type="entry name" value="LbH_GlmU_C"/>
    <property type="match status" value="1"/>
</dbReference>
<dbReference type="Gene3D" id="2.160.10.10">
    <property type="entry name" value="Hexapeptide repeat proteins"/>
    <property type="match status" value="1"/>
</dbReference>
<dbReference type="Gene3D" id="3.90.550.10">
    <property type="entry name" value="Spore Coat Polysaccharide Biosynthesis Protein SpsA, Chain A"/>
    <property type="match status" value="1"/>
</dbReference>
<dbReference type="HAMAP" id="MF_01631">
    <property type="entry name" value="GlmU"/>
    <property type="match status" value="1"/>
</dbReference>
<dbReference type="InterPro" id="IPR005882">
    <property type="entry name" value="Bifunctional_GlmU"/>
</dbReference>
<dbReference type="InterPro" id="IPR050065">
    <property type="entry name" value="GlmU-like"/>
</dbReference>
<dbReference type="InterPro" id="IPR038009">
    <property type="entry name" value="GlmU_C_LbH"/>
</dbReference>
<dbReference type="InterPro" id="IPR001451">
    <property type="entry name" value="Hexapep"/>
</dbReference>
<dbReference type="InterPro" id="IPR025877">
    <property type="entry name" value="MobA-like_NTP_Trfase"/>
</dbReference>
<dbReference type="InterPro" id="IPR029044">
    <property type="entry name" value="Nucleotide-diphossugar_trans"/>
</dbReference>
<dbReference type="InterPro" id="IPR011004">
    <property type="entry name" value="Trimer_LpxA-like_sf"/>
</dbReference>
<dbReference type="NCBIfam" id="TIGR01173">
    <property type="entry name" value="glmU"/>
    <property type="match status" value="1"/>
</dbReference>
<dbReference type="NCBIfam" id="NF006986">
    <property type="entry name" value="PRK09451.1"/>
    <property type="match status" value="1"/>
</dbReference>
<dbReference type="PANTHER" id="PTHR43584:SF3">
    <property type="entry name" value="BIFUNCTIONAL PROTEIN GLMU"/>
    <property type="match status" value="1"/>
</dbReference>
<dbReference type="PANTHER" id="PTHR43584">
    <property type="entry name" value="NUCLEOTIDYL TRANSFERASE"/>
    <property type="match status" value="1"/>
</dbReference>
<dbReference type="Pfam" id="PF00132">
    <property type="entry name" value="Hexapep"/>
    <property type="match status" value="1"/>
</dbReference>
<dbReference type="Pfam" id="PF12804">
    <property type="entry name" value="NTP_transf_3"/>
    <property type="match status" value="1"/>
</dbReference>
<dbReference type="SUPFAM" id="SSF53448">
    <property type="entry name" value="Nucleotide-diphospho-sugar transferases"/>
    <property type="match status" value="1"/>
</dbReference>
<dbReference type="SUPFAM" id="SSF51161">
    <property type="entry name" value="Trimeric LpxA-like enzymes"/>
    <property type="match status" value="1"/>
</dbReference>
<proteinExistence type="inferred from homology"/>
<keyword id="KW-0012">Acyltransferase</keyword>
<keyword id="KW-0133">Cell shape</keyword>
<keyword id="KW-0961">Cell wall biogenesis/degradation</keyword>
<keyword id="KW-0963">Cytoplasm</keyword>
<keyword id="KW-0460">Magnesium</keyword>
<keyword id="KW-0479">Metal-binding</keyword>
<keyword id="KW-0511">Multifunctional enzyme</keyword>
<keyword id="KW-0548">Nucleotidyltransferase</keyword>
<keyword id="KW-0573">Peptidoglycan synthesis</keyword>
<keyword id="KW-0677">Repeat</keyword>
<keyword id="KW-0808">Transferase</keyword>
<accession>C4K351</accession>
<evidence type="ECO:0000255" key="1">
    <source>
        <dbReference type="HAMAP-Rule" id="MF_01631"/>
    </source>
</evidence>
<organism>
    <name type="scientific">Hamiltonella defensa subsp. Acyrthosiphon pisum (strain 5AT)</name>
    <dbReference type="NCBI Taxonomy" id="572265"/>
    <lineage>
        <taxon>Bacteria</taxon>
        <taxon>Pseudomonadati</taxon>
        <taxon>Pseudomonadota</taxon>
        <taxon>Gammaproteobacteria</taxon>
        <taxon>Enterobacterales</taxon>
        <taxon>Enterobacteriaceae</taxon>
        <taxon>aphid secondary symbionts</taxon>
        <taxon>Candidatus Hamiltonella</taxon>
    </lineage>
</organism>
<comment type="function">
    <text evidence="1">Catalyzes the last two sequential reactions in the de novo biosynthetic pathway for UDP-N-acetylglucosamine (UDP-GlcNAc). The C-terminal domain catalyzes the transfer of acetyl group from acetyl coenzyme A to glucosamine-1-phosphate (GlcN-1-P) to produce N-acetylglucosamine-1-phosphate (GlcNAc-1-P), which is converted into UDP-GlcNAc by the transfer of uridine 5-monophosphate (from uridine 5-triphosphate), a reaction catalyzed by the N-terminal domain.</text>
</comment>
<comment type="catalytic activity">
    <reaction evidence="1">
        <text>alpha-D-glucosamine 1-phosphate + acetyl-CoA = N-acetyl-alpha-D-glucosamine 1-phosphate + CoA + H(+)</text>
        <dbReference type="Rhea" id="RHEA:13725"/>
        <dbReference type="ChEBI" id="CHEBI:15378"/>
        <dbReference type="ChEBI" id="CHEBI:57287"/>
        <dbReference type="ChEBI" id="CHEBI:57288"/>
        <dbReference type="ChEBI" id="CHEBI:57776"/>
        <dbReference type="ChEBI" id="CHEBI:58516"/>
        <dbReference type="EC" id="2.3.1.157"/>
    </reaction>
</comment>
<comment type="catalytic activity">
    <reaction evidence="1">
        <text>N-acetyl-alpha-D-glucosamine 1-phosphate + UTP + H(+) = UDP-N-acetyl-alpha-D-glucosamine + diphosphate</text>
        <dbReference type="Rhea" id="RHEA:13509"/>
        <dbReference type="ChEBI" id="CHEBI:15378"/>
        <dbReference type="ChEBI" id="CHEBI:33019"/>
        <dbReference type="ChEBI" id="CHEBI:46398"/>
        <dbReference type="ChEBI" id="CHEBI:57705"/>
        <dbReference type="ChEBI" id="CHEBI:57776"/>
        <dbReference type="EC" id="2.7.7.23"/>
    </reaction>
</comment>
<comment type="cofactor">
    <cofactor evidence="1">
        <name>Mg(2+)</name>
        <dbReference type="ChEBI" id="CHEBI:18420"/>
    </cofactor>
    <text evidence="1">Binds 1 Mg(2+) ion per subunit.</text>
</comment>
<comment type="pathway">
    <text evidence="1">Nucleotide-sugar biosynthesis; UDP-N-acetyl-alpha-D-glucosamine biosynthesis; N-acetyl-alpha-D-glucosamine 1-phosphate from alpha-D-glucosamine 6-phosphate (route II): step 2/2.</text>
</comment>
<comment type="pathway">
    <text evidence="1">Nucleotide-sugar biosynthesis; UDP-N-acetyl-alpha-D-glucosamine biosynthesis; UDP-N-acetyl-alpha-D-glucosamine from N-acetyl-alpha-D-glucosamine 1-phosphate: step 1/1.</text>
</comment>
<comment type="pathway">
    <text evidence="1">Bacterial outer membrane biogenesis; LPS lipid A biosynthesis.</text>
</comment>
<comment type="subunit">
    <text evidence="1">Homotrimer.</text>
</comment>
<comment type="subcellular location">
    <subcellularLocation>
        <location evidence="1">Cytoplasm</location>
    </subcellularLocation>
</comment>
<comment type="similarity">
    <text evidence="1">In the N-terminal section; belongs to the N-acetylglucosamine-1-phosphate uridyltransferase family.</text>
</comment>
<comment type="similarity">
    <text evidence="1">In the C-terminal section; belongs to the transferase hexapeptide repeat family.</text>
</comment>